<feature type="chain" id="PRO_1000131890" description="4-deoxy-L-threo-5-hexosulose-uronate ketol-isomerase">
    <location>
        <begin position="1"/>
        <end position="278"/>
    </location>
</feature>
<feature type="binding site" evidence="1">
    <location>
        <position position="196"/>
    </location>
    <ligand>
        <name>Zn(2+)</name>
        <dbReference type="ChEBI" id="CHEBI:29105"/>
    </ligand>
</feature>
<feature type="binding site" evidence="1">
    <location>
        <position position="198"/>
    </location>
    <ligand>
        <name>Zn(2+)</name>
        <dbReference type="ChEBI" id="CHEBI:29105"/>
    </ligand>
</feature>
<feature type="binding site" evidence="1">
    <location>
        <position position="203"/>
    </location>
    <ligand>
        <name>Zn(2+)</name>
        <dbReference type="ChEBI" id="CHEBI:29105"/>
    </ligand>
</feature>
<feature type="binding site" evidence="1">
    <location>
        <position position="245"/>
    </location>
    <ligand>
        <name>Zn(2+)</name>
        <dbReference type="ChEBI" id="CHEBI:29105"/>
    </ligand>
</feature>
<reference key="1">
    <citation type="journal article" date="2008" name="Genome Res.">
        <title>Comparative genome analysis of Salmonella enteritidis PT4 and Salmonella gallinarum 287/91 provides insights into evolutionary and host adaptation pathways.</title>
        <authorList>
            <person name="Thomson N.R."/>
            <person name="Clayton D.J."/>
            <person name="Windhorst D."/>
            <person name="Vernikos G."/>
            <person name="Davidson S."/>
            <person name="Churcher C."/>
            <person name="Quail M.A."/>
            <person name="Stevens M."/>
            <person name="Jones M.A."/>
            <person name="Watson M."/>
            <person name="Barron A."/>
            <person name="Layton A."/>
            <person name="Pickard D."/>
            <person name="Kingsley R.A."/>
            <person name="Bignell A."/>
            <person name="Clark L."/>
            <person name="Harris B."/>
            <person name="Ormond D."/>
            <person name="Abdellah Z."/>
            <person name="Brooks K."/>
            <person name="Cherevach I."/>
            <person name="Chillingworth T."/>
            <person name="Woodward J."/>
            <person name="Norberczak H."/>
            <person name="Lord A."/>
            <person name="Arrowsmith C."/>
            <person name="Jagels K."/>
            <person name="Moule S."/>
            <person name="Mungall K."/>
            <person name="Saunders M."/>
            <person name="Whitehead S."/>
            <person name="Chabalgoity J.A."/>
            <person name="Maskell D."/>
            <person name="Humphreys T."/>
            <person name="Roberts M."/>
            <person name="Barrow P.A."/>
            <person name="Dougan G."/>
            <person name="Parkhill J."/>
        </authorList>
    </citation>
    <scope>NUCLEOTIDE SEQUENCE [LARGE SCALE GENOMIC DNA]</scope>
    <source>
        <strain>P125109</strain>
    </source>
</reference>
<name>KDUI_SALEP</name>
<sequence length="278" mass="31205">MDVRQSIHSEHAKTLDTQALRREFLIENIFVADEYTMVYSHIDRIIVGGIMPVSHSVEIGGEVGKQLGVSRLLDRRELGVINIGGAGAIIVDGQRHDIGHRDALYIGKGAKELVFVSNEASRPAKFYYNCAPAHTAYPTKKVSPADVAPVTLGDNLTSNRRTINKYFVPDVLETCQLSMGLTELAPGNLWNTMPCHTHERRMEVYLYFNMEEDSCVFHMMGQPQETRHIVMRNEQAVISPSWSIHSGVGTKAYTFIWGMVGENQVFDDMDHVAVQDLR</sequence>
<comment type="function">
    <text evidence="1">Catalyzes the isomerization of 5-dehydro-4-deoxy-D-glucuronate to 3-deoxy-D-glycero-2,5-hexodiulosonate.</text>
</comment>
<comment type="catalytic activity">
    <reaction evidence="1">
        <text>5-dehydro-4-deoxy-D-glucuronate = 3-deoxy-D-glycero-2,5-hexodiulosonate</text>
        <dbReference type="Rhea" id="RHEA:23896"/>
        <dbReference type="ChEBI" id="CHEBI:17117"/>
        <dbReference type="ChEBI" id="CHEBI:29071"/>
        <dbReference type="EC" id="5.3.1.17"/>
    </reaction>
</comment>
<comment type="cofactor">
    <cofactor evidence="1">
        <name>Zn(2+)</name>
        <dbReference type="ChEBI" id="CHEBI:29105"/>
    </cofactor>
    <text evidence="1">Binds 1 zinc ion per subunit.</text>
</comment>
<comment type="pathway">
    <text evidence="1">Glycan metabolism; pectin degradation; 2-dehydro-3-deoxy-D-gluconate from pectin: step 4/5.</text>
</comment>
<comment type="similarity">
    <text evidence="1">Belongs to the KduI family.</text>
</comment>
<organism>
    <name type="scientific">Salmonella enteritidis PT4 (strain P125109)</name>
    <dbReference type="NCBI Taxonomy" id="550537"/>
    <lineage>
        <taxon>Bacteria</taxon>
        <taxon>Pseudomonadati</taxon>
        <taxon>Pseudomonadota</taxon>
        <taxon>Gammaproteobacteria</taxon>
        <taxon>Enterobacterales</taxon>
        <taxon>Enterobacteriaceae</taxon>
        <taxon>Salmonella</taxon>
    </lineage>
</organism>
<accession>B5QWV0</accession>
<evidence type="ECO:0000255" key="1">
    <source>
        <dbReference type="HAMAP-Rule" id="MF_00687"/>
    </source>
</evidence>
<protein>
    <recommendedName>
        <fullName evidence="1">4-deoxy-L-threo-5-hexosulose-uronate ketol-isomerase</fullName>
        <ecNumber evidence="1">5.3.1.17</ecNumber>
    </recommendedName>
    <alternativeName>
        <fullName evidence="1">5-keto-4-deoxyuronate isomerase</fullName>
    </alternativeName>
    <alternativeName>
        <fullName evidence="1">DKI isomerase</fullName>
    </alternativeName>
</protein>
<proteinExistence type="inferred from homology"/>
<gene>
    <name evidence="1" type="primary">kduI</name>
    <name type="ordered locus">SEN2861</name>
</gene>
<dbReference type="EC" id="5.3.1.17" evidence="1"/>
<dbReference type="EMBL" id="AM933172">
    <property type="protein sequence ID" value="CAR34439.1"/>
    <property type="molecule type" value="Genomic_DNA"/>
</dbReference>
<dbReference type="RefSeq" id="WP_000383274.1">
    <property type="nucleotide sequence ID" value="NC_011294.1"/>
</dbReference>
<dbReference type="SMR" id="B5QWV0"/>
<dbReference type="KEGG" id="set:SEN2861"/>
<dbReference type="HOGENOM" id="CLU_062609_0_0_6"/>
<dbReference type="UniPathway" id="UPA00545">
    <property type="reaction ID" value="UER00826"/>
</dbReference>
<dbReference type="Proteomes" id="UP000000613">
    <property type="component" value="Chromosome"/>
</dbReference>
<dbReference type="GO" id="GO:0008697">
    <property type="term" value="F:4-deoxy-L-threo-5-hexosulose-uronate ketol-isomerase activity"/>
    <property type="evidence" value="ECO:0007669"/>
    <property type="project" value="UniProtKB-UniRule"/>
</dbReference>
<dbReference type="GO" id="GO:0008270">
    <property type="term" value="F:zinc ion binding"/>
    <property type="evidence" value="ECO:0007669"/>
    <property type="project" value="UniProtKB-UniRule"/>
</dbReference>
<dbReference type="GO" id="GO:0019698">
    <property type="term" value="P:D-galacturonate catabolic process"/>
    <property type="evidence" value="ECO:0007669"/>
    <property type="project" value="TreeGrafter"/>
</dbReference>
<dbReference type="GO" id="GO:0042840">
    <property type="term" value="P:D-glucuronate catabolic process"/>
    <property type="evidence" value="ECO:0007669"/>
    <property type="project" value="TreeGrafter"/>
</dbReference>
<dbReference type="GO" id="GO:0045490">
    <property type="term" value="P:pectin catabolic process"/>
    <property type="evidence" value="ECO:0007669"/>
    <property type="project" value="UniProtKB-UniRule"/>
</dbReference>
<dbReference type="CDD" id="cd20491">
    <property type="entry name" value="cupin_KduI_C"/>
    <property type="match status" value="1"/>
</dbReference>
<dbReference type="CDD" id="cd20294">
    <property type="entry name" value="cupin_KduI_N"/>
    <property type="match status" value="1"/>
</dbReference>
<dbReference type="FunFam" id="2.60.120.10:FF:000018">
    <property type="entry name" value="4-deoxy-L-threo-5-hexosulose-uronate ketol-isomerase"/>
    <property type="match status" value="1"/>
</dbReference>
<dbReference type="FunFam" id="2.60.120.520:FF:000001">
    <property type="entry name" value="4-deoxy-L-threo-5-hexosulose-uronate ketol-isomerase"/>
    <property type="match status" value="1"/>
</dbReference>
<dbReference type="Gene3D" id="2.60.120.10">
    <property type="entry name" value="Jelly Rolls"/>
    <property type="match status" value="1"/>
</dbReference>
<dbReference type="Gene3D" id="2.60.120.520">
    <property type="entry name" value="pectin degrading enzyme 5-keto 4- deoxyuronate isomerase, domain 1"/>
    <property type="match status" value="1"/>
</dbReference>
<dbReference type="HAMAP" id="MF_00687">
    <property type="entry name" value="KduI"/>
    <property type="match status" value="1"/>
</dbReference>
<dbReference type="InterPro" id="IPR007045">
    <property type="entry name" value="KduI"/>
</dbReference>
<dbReference type="InterPro" id="IPR021120">
    <property type="entry name" value="KduI/IolB_isomerase"/>
</dbReference>
<dbReference type="InterPro" id="IPR027449">
    <property type="entry name" value="KduI_N"/>
</dbReference>
<dbReference type="InterPro" id="IPR014710">
    <property type="entry name" value="RmlC-like_jellyroll"/>
</dbReference>
<dbReference type="InterPro" id="IPR011051">
    <property type="entry name" value="RmlC_Cupin_sf"/>
</dbReference>
<dbReference type="NCBIfam" id="NF002091">
    <property type="entry name" value="PRK00924.1"/>
    <property type="match status" value="1"/>
</dbReference>
<dbReference type="PANTHER" id="PTHR38461">
    <property type="entry name" value="4-DEOXY-L-THREO-5-HEXOSULOSE-URONATE KETOL-ISOMERASE"/>
    <property type="match status" value="1"/>
</dbReference>
<dbReference type="PANTHER" id="PTHR38461:SF1">
    <property type="entry name" value="4-DEOXY-L-THREO-5-HEXOSULOSE-URONATE KETOL-ISOMERASE"/>
    <property type="match status" value="1"/>
</dbReference>
<dbReference type="Pfam" id="PF04962">
    <property type="entry name" value="KduI"/>
    <property type="match status" value="1"/>
</dbReference>
<dbReference type="PIRSF" id="PIRSF006625">
    <property type="entry name" value="KduI"/>
    <property type="match status" value="1"/>
</dbReference>
<dbReference type="SUPFAM" id="SSF51182">
    <property type="entry name" value="RmlC-like cupins"/>
    <property type="match status" value="1"/>
</dbReference>
<keyword id="KW-0413">Isomerase</keyword>
<keyword id="KW-0479">Metal-binding</keyword>
<keyword id="KW-0862">Zinc</keyword>